<accession>Q9T7Q6</accession>
<gene>
    <name type="primary">MT-CYB</name>
    <name type="synonym">COB</name>
    <name type="synonym">CYTB</name>
    <name type="synonym">MTCYB</name>
</gene>
<reference key="1">
    <citation type="journal article" date="1999" name="Cladistics">
        <title>Molecular phylogeny and biogeography of Madagascar's native rodents (Muridae: Nesomyinae): a test of the single origin hypothesis.</title>
        <authorList>
            <person name="Jansa S.A."/>
            <person name="Goodman S.M."/>
            <person name="Tucker P.K."/>
        </authorList>
    </citation>
    <scope>NUCLEOTIDE SEQUENCE [GENOMIC DNA]</scope>
</reference>
<protein>
    <recommendedName>
        <fullName>Cytochrome b</fullName>
    </recommendedName>
    <alternativeName>
        <fullName>Complex III subunit 3</fullName>
    </alternativeName>
    <alternativeName>
        <fullName>Complex III subunit III</fullName>
    </alternativeName>
    <alternativeName>
        <fullName>Cytochrome b-c1 complex subunit 3</fullName>
    </alternativeName>
    <alternativeName>
        <fullName>Ubiquinol-cytochrome-c reductase complex cytochrome b subunit</fullName>
    </alternativeName>
</protein>
<comment type="function">
    <text evidence="2">Component of the ubiquinol-cytochrome c reductase complex (complex III or cytochrome b-c1 complex) that is part of the mitochondrial respiratory chain. The b-c1 complex mediates electron transfer from ubiquinol to cytochrome c. Contributes to the generation of a proton gradient across the mitochondrial membrane that is then used for ATP synthesis.</text>
</comment>
<comment type="cofactor">
    <cofactor evidence="2">
        <name>heme b</name>
        <dbReference type="ChEBI" id="CHEBI:60344"/>
    </cofactor>
    <text evidence="2">Binds 2 heme b groups non-covalently.</text>
</comment>
<comment type="subunit">
    <text evidence="2">The cytochrome bc1 complex contains 11 subunits: 3 respiratory subunits (MT-CYB, CYC1 and UQCRFS1), 2 core proteins (UQCRC1 and UQCRC2) and 6 low-molecular weight proteins (UQCRH/QCR6, UQCRB/QCR7, UQCRQ/QCR8, UQCR10/QCR9, UQCR11/QCR10 and a cleavage product of UQCRFS1). This cytochrome bc1 complex then forms a dimer.</text>
</comment>
<comment type="subcellular location">
    <subcellularLocation>
        <location evidence="2">Mitochondrion inner membrane</location>
        <topology evidence="2">Multi-pass membrane protein</topology>
    </subcellularLocation>
</comment>
<comment type="miscellaneous">
    <text evidence="1">Heme 1 (or BL or b562) is low-potential and absorbs at about 562 nm, and heme 2 (or BH or b566) is high-potential and absorbs at about 566 nm.</text>
</comment>
<comment type="similarity">
    <text evidence="3 4">Belongs to the cytochrome b family.</text>
</comment>
<comment type="caution">
    <text evidence="2">The full-length protein contains only eight transmembrane helices, not nine as predicted by bioinformatics tools.</text>
</comment>
<sequence length="380" mass="42775">MTNIRKSHPLLKIINHSFIDLPAPSNISSWWNFGSLLGICLILQIATGLFLAMHYTSDTTTAFSSVTHICRDVNYGWLIRYLHANGASMFFICLFIHVGRGMYYGSYMSIETWNMGIILLFAVMATAFMGYVLPWGQMSFWGATVITNLLSAIPYIGTTLVEWIWGGFSVDKATLTRFFAFHFILPFIIVALVMVHLLFLHETGSNNPSGLNSDSDKIPFHPYYTIKDILGVLLLLLFLISLVLFTPDLLGDPDNYTPANPLNTPPHIXPEWYFLFAYAILRSIPNKLGGVLALILSILVLALLPHLHTSKLQSLMFRPLTQTLYWILVADLLTLTWIGGQPVEYPFIIIGQLASILYFAIILIFMPMAGMIEDNVLKMD</sequence>
<keyword id="KW-0249">Electron transport</keyword>
<keyword id="KW-0349">Heme</keyword>
<keyword id="KW-0408">Iron</keyword>
<keyword id="KW-0472">Membrane</keyword>
<keyword id="KW-0479">Metal-binding</keyword>
<keyword id="KW-0496">Mitochondrion</keyword>
<keyword id="KW-0999">Mitochondrion inner membrane</keyword>
<keyword id="KW-0679">Respiratory chain</keyword>
<keyword id="KW-0812">Transmembrane</keyword>
<keyword id="KW-1133">Transmembrane helix</keyword>
<keyword id="KW-0813">Transport</keyword>
<keyword id="KW-0830">Ubiquinone</keyword>
<organism>
    <name type="scientific">Eliurus ellermani</name>
    <name type="common">Ellerman's tufted-tailed rat</name>
    <dbReference type="NCBI Taxonomy" id="107274"/>
    <lineage>
        <taxon>Eukaryota</taxon>
        <taxon>Metazoa</taxon>
        <taxon>Chordata</taxon>
        <taxon>Craniata</taxon>
        <taxon>Vertebrata</taxon>
        <taxon>Euteleostomi</taxon>
        <taxon>Mammalia</taxon>
        <taxon>Eutheria</taxon>
        <taxon>Euarchontoglires</taxon>
        <taxon>Glires</taxon>
        <taxon>Rodentia</taxon>
        <taxon>Myomorpha</taxon>
        <taxon>Muroidea</taxon>
        <taxon>Nesomyidae</taxon>
        <taxon>Nesomyinae</taxon>
        <taxon>Eliurus</taxon>
    </lineage>
</organism>
<feature type="chain" id="PRO_0000255049" description="Cytochrome b">
    <location>
        <begin position="1"/>
        <end position="380"/>
    </location>
</feature>
<feature type="transmembrane region" description="Helical" evidence="2">
    <location>
        <begin position="33"/>
        <end position="53"/>
    </location>
</feature>
<feature type="transmembrane region" description="Helical" evidence="2">
    <location>
        <begin position="77"/>
        <end position="98"/>
    </location>
</feature>
<feature type="transmembrane region" description="Helical" evidence="2">
    <location>
        <begin position="113"/>
        <end position="133"/>
    </location>
</feature>
<feature type="transmembrane region" description="Helical" evidence="2">
    <location>
        <begin position="178"/>
        <end position="198"/>
    </location>
</feature>
<feature type="transmembrane region" description="Helical" evidence="2">
    <location>
        <begin position="226"/>
        <end position="246"/>
    </location>
</feature>
<feature type="transmembrane region" description="Helical" evidence="2">
    <location>
        <begin position="288"/>
        <end position="308"/>
    </location>
</feature>
<feature type="transmembrane region" description="Helical" evidence="2">
    <location>
        <begin position="320"/>
        <end position="340"/>
    </location>
</feature>
<feature type="transmembrane region" description="Helical" evidence="2">
    <location>
        <begin position="347"/>
        <end position="367"/>
    </location>
</feature>
<feature type="binding site" description="axial binding residue" evidence="2">
    <location>
        <position position="83"/>
    </location>
    <ligand>
        <name>heme b</name>
        <dbReference type="ChEBI" id="CHEBI:60344"/>
        <label>b562</label>
    </ligand>
    <ligandPart>
        <name>Fe</name>
        <dbReference type="ChEBI" id="CHEBI:18248"/>
    </ligandPart>
</feature>
<feature type="binding site" description="axial binding residue" evidence="2">
    <location>
        <position position="97"/>
    </location>
    <ligand>
        <name>heme b</name>
        <dbReference type="ChEBI" id="CHEBI:60344"/>
        <label>b566</label>
    </ligand>
    <ligandPart>
        <name>Fe</name>
        <dbReference type="ChEBI" id="CHEBI:18248"/>
    </ligandPart>
</feature>
<feature type="binding site" description="axial binding residue" evidence="2">
    <location>
        <position position="182"/>
    </location>
    <ligand>
        <name>heme b</name>
        <dbReference type="ChEBI" id="CHEBI:60344"/>
        <label>b562</label>
    </ligand>
    <ligandPart>
        <name>Fe</name>
        <dbReference type="ChEBI" id="CHEBI:18248"/>
    </ligandPart>
</feature>
<feature type="binding site" description="axial binding residue" evidence="2">
    <location>
        <position position="196"/>
    </location>
    <ligand>
        <name>heme b</name>
        <dbReference type="ChEBI" id="CHEBI:60344"/>
        <label>b566</label>
    </ligand>
    <ligandPart>
        <name>Fe</name>
        <dbReference type="ChEBI" id="CHEBI:18248"/>
    </ligandPart>
</feature>
<feature type="binding site" evidence="2">
    <location>
        <position position="201"/>
    </location>
    <ligand>
        <name>a ubiquinone</name>
        <dbReference type="ChEBI" id="CHEBI:16389"/>
    </ligand>
</feature>
<geneLocation type="mitochondrion"/>
<dbReference type="EMBL" id="AF160573">
    <property type="protein sequence ID" value="AAF15189.1"/>
    <property type="molecule type" value="Genomic_DNA"/>
</dbReference>
<dbReference type="GO" id="GO:0005743">
    <property type="term" value="C:mitochondrial inner membrane"/>
    <property type="evidence" value="ECO:0007669"/>
    <property type="project" value="UniProtKB-SubCell"/>
</dbReference>
<dbReference type="GO" id="GO:0045275">
    <property type="term" value="C:respiratory chain complex III"/>
    <property type="evidence" value="ECO:0007669"/>
    <property type="project" value="InterPro"/>
</dbReference>
<dbReference type="GO" id="GO:0046872">
    <property type="term" value="F:metal ion binding"/>
    <property type="evidence" value="ECO:0007669"/>
    <property type="project" value="UniProtKB-KW"/>
</dbReference>
<dbReference type="GO" id="GO:0008121">
    <property type="term" value="F:ubiquinol-cytochrome-c reductase activity"/>
    <property type="evidence" value="ECO:0007669"/>
    <property type="project" value="InterPro"/>
</dbReference>
<dbReference type="GO" id="GO:0006122">
    <property type="term" value="P:mitochondrial electron transport, ubiquinol to cytochrome c"/>
    <property type="evidence" value="ECO:0007669"/>
    <property type="project" value="TreeGrafter"/>
</dbReference>
<dbReference type="CDD" id="cd00290">
    <property type="entry name" value="cytochrome_b_C"/>
    <property type="match status" value="1"/>
</dbReference>
<dbReference type="CDD" id="cd00284">
    <property type="entry name" value="Cytochrome_b_N"/>
    <property type="match status" value="1"/>
</dbReference>
<dbReference type="FunFam" id="1.20.810.10:FF:000002">
    <property type="entry name" value="Cytochrome b"/>
    <property type="match status" value="1"/>
</dbReference>
<dbReference type="Gene3D" id="1.20.810.10">
    <property type="entry name" value="Cytochrome Bc1 Complex, Chain C"/>
    <property type="match status" value="1"/>
</dbReference>
<dbReference type="InterPro" id="IPR005798">
    <property type="entry name" value="Cyt_b/b6_C"/>
</dbReference>
<dbReference type="InterPro" id="IPR036150">
    <property type="entry name" value="Cyt_b/b6_C_sf"/>
</dbReference>
<dbReference type="InterPro" id="IPR005797">
    <property type="entry name" value="Cyt_b/b6_N"/>
</dbReference>
<dbReference type="InterPro" id="IPR027387">
    <property type="entry name" value="Cytb/b6-like_sf"/>
</dbReference>
<dbReference type="InterPro" id="IPR030689">
    <property type="entry name" value="Cytochrome_b"/>
</dbReference>
<dbReference type="InterPro" id="IPR048260">
    <property type="entry name" value="Cytochrome_b_C_euk/bac"/>
</dbReference>
<dbReference type="InterPro" id="IPR048259">
    <property type="entry name" value="Cytochrome_b_N_euk/bac"/>
</dbReference>
<dbReference type="InterPro" id="IPR016174">
    <property type="entry name" value="Di-haem_cyt_TM"/>
</dbReference>
<dbReference type="PANTHER" id="PTHR19271">
    <property type="entry name" value="CYTOCHROME B"/>
    <property type="match status" value="1"/>
</dbReference>
<dbReference type="PANTHER" id="PTHR19271:SF16">
    <property type="entry name" value="CYTOCHROME B"/>
    <property type="match status" value="1"/>
</dbReference>
<dbReference type="Pfam" id="PF00032">
    <property type="entry name" value="Cytochrom_B_C"/>
    <property type="match status" value="1"/>
</dbReference>
<dbReference type="Pfam" id="PF00033">
    <property type="entry name" value="Cytochrome_B"/>
    <property type="match status" value="1"/>
</dbReference>
<dbReference type="PIRSF" id="PIRSF038885">
    <property type="entry name" value="COB"/>
    <property type="match status" value="1"/>
</dbReference>
<dbReference type="SUPFAM" id="SSF81648">
    <property type="entry name" value="a domain/subunit of cytochrome bc1 complex (Ubiquinol-cytochrome c reductase)"/>
    <property type="match status" value="1"/>
</dbReference>
<dbReference type="SUPFAM" id="SSF81342">
    <property type="entry name" value="Transmembrane di-heme cytochromes"/>
    <property type="match status" value="1"/>
</dbReference>
<dbReference type="PROSITE" id="PS51003">
    <property type="entry name" value="CYTB_CTER"/>
    <property type="match status" value="1"/>
</dbReference>
<dbReference type="PROSITE" id="PS51002">
    <property type="entry name" value="CYTB_NTER"/>
    <property type="match status" value="1"/>
</dbReference>
<name>CYB_ELIEL</name>
<evidence type="ECO:0000250" key="1"/>
<evidence type="ECO:0000250" key="2">
    <source>
        <dbReference type="UniProtKB" id="P00157"/>
    </source>
</evidence>
<evidence type="ECO:0000255" key="3">
    <source>
        <dbReference type="PROSITE-ProRule" id="PRU00967"/>
    </source>
</evidence>
<evidence type="ECO:0000255" key="4">
    <source>
        <dbReference type="PROSITE-ProRule" id="PRU00968"/>
    </source>
</evidence>
<proteinExistence type="inferred from homology"/>